<keyword id="KW-0002">3D-structure</keyword>
<keyword id="KW-0025">Alternative splicing</keyword>
<keyword id="KW-0449">Lipoprotein</keyword>
<keyword id="KW-0472">Membrane</keyword>
<keyword id="KW-0479">Metal-binding</keyword>
<keyword id="KW-0496">Mitochondrion</keyword>
<keyword id="KW-1000">Mitochondrion outer membrane</keyword>
<keyword id="KW-0500">Molybdenum</keyword>
<keyword id="KW-0519">Myristate</keyword>
<keyword id="KW-0560">Oxidoreductase</keyword>
<keyword id="KW-1267">Proteomics identification</keyword>
<keyword id="KW-1185">Reference proteome</keyword>
<keyword id="KW-0735">Signal-anchor</keyword>
<keyword id="KW-0812">Transmembrane</keyword>
<keyword id="KW-1133">Transmembrane helix</keyword>
<organism>
    <name type="scientific">Homo sapiens</name>
    <name type="common">Human</name>
    <dbReference type="NCBI Taxonomy" id="9606"/>
    <lineage>
        <taxon>Eukaryota</taxon>
        <taxon>Metazoa</taxon>
        <taxon>Chordata</taxon>
        <taxon>Craniata</taxon>
        <taxon>Vertebrata</taxon>
        <taxon>Euteleostomi</taxon>
        <taxon>Mammalia</taxon>
        <taxon>Eutheria</taxon>
        <taxon>Euarchontoglires</taxon>
        <taxon>Primates</taxon>
        <taxon>Haplorrhini</taxon>
        <taxon>Catarrhini</taxon>
        <taxon>Hominidae</taxon>
        <taxon>Homo</taxon>
    </lineage>
</organism>
<protein>
    <recommendedName>
        <fullName evidence="15">Mitochondrial amidoxime-reducing component 1</fullName>
        <shortName evidence="16">mARC1</shortName>
        <ecNumber evidence="6">1.7.-.-</ecNumber>
    </recommendedName>
    <alternativeName>
        <fullName evidence="16">Molybdenum cofactor sulfurase C-terminal domain-containing protein 1</fullName>
        <shortName>MOSC domain-containing protein 1</shortName>
        <shortName>Moco sulfurase C-terminal domain-containing protein 1</shortName>
    </alternativeName>
</protein>
<gene>
    <name evidence="19" type="primary">MTARC1</name>
    <name type="synonym">MARC1</name>
    <name type="synonym">MOSC1</name>
</gene>
<evidence type="ECO:0000255" key="1"/>
<evidence type="ECO:0000255" key="2">
    <source>
        <dbReference type="PROSITE-ProRule" id="PRU00670"/>
    </source>
</evidence>
<evidence type="ECO:0000269" key="3">
    <source>
    </source>
</evidence>
<evidence type="ECO:0000269" key="4">
    <source>
    </source>
</evidence>
<evidence type="ECO:0000269" key="5">
    <source>
    </source>
</evidence>
<evidence type="ECO:0000269" key="6">
    <source>
    </source>
</evidence>
<evidence type="ECO:0000269" key="7">
    <source>
    </source>
</evidence>
<evidence type="ECO:0000269" key="8">
    <source>
    </source>
</evidence>
<evidence type="ECO:0000269" key="9">
    <source>
    </source>
</evidence>
<evidence type="ECO:0000269" key="10">
    <source>
    </source>
</evidence>
<evidence type="ECO:0000269" key="11">
    <source>
    </source>
</evidence>
<evidence type="ECO:0000269" key="12">
    <source ref="2"/>
</evidence>
<evidence type="ECO:0000269" key="13">
    <source ref="4"/>
</evidence>
<evidence type="ECO:0000303" key="14">
    <source>
    </source>
</evidence>
<evidence type="ECO:0000303" key="15">
    <source>
    </source>
</evidence>
<evidence type="ECO:0000303" key="16">
    <source>
    </source>
</evidence>
<evidence type="ECO:0000305" key="17"/>
<evidence type="ECO:0000305" key="18">
    <source>
    </source>
</evidence>
<evidence type="ECO:0000312" key="19">
    <source>
        <dbReference type="HGNC" id="HGNC:26189"/>
    </source>
</evidence>
<evidence type="ECO:0007744" key="20">
    <source>
        <dbReference type="PDB" id="6FW2"/>
    </source>
</evidence>
<evidence type="ECO:0007829" key="21">
    <source>
        <dbReference type="PDB" id="6FW2"/>
    </source>
</evidence>
<accession>Q5VT66</accession>
<accession>A8K447</accession>
<accession>B2D078</accession>
<accession>Q5VVS9</accession>
<accession>Q5VVT0</accession>
<accession>Q5VVT1</accession>
<accession>Q8N9P5</accession>
<accession>Q96FN8</accession>
<accession>Q9H6C7</accession>
<sequence>MGAAGSSALARFVLLAQSRPGWLGVAALGLTAVALGAVAWRRAWPTRRRRLLQQVGTVAQLWIYPVKSCKGVPVSEAECTAMGLRSGNLRDRFWLVINQEGNMVTARQEPRLVLISLTCDGDTLTLSAAYTKDLLLPIKTPTTNAVHKCRVHGLEIEGRDCGEATAQWITSFLKSQPYRLVHFEPHMRPRRPHQIADLFRPKDQIAYSDTSPFLILSEASLADLNSRLEKKVKATNFRPNIVISGCDVYAEDSWDELLIGDVELKRVMACSRCILTTVDPDTGVMSRKEPLETLKSYRQCDPSERKLYGKSPLFGQYFVLENPGTIKVGDPVYLLGQ</sequence>
<feature type="initiator methionine" description="Removed" evidence="9 10">
    <location>
        <position position="1"/>
    </location>
</feature>
<feature type="chain" id="PRO_0000273335" description="Mitochondrial amidoxime-reducing component 1">
    <location>
        <begin position="2"/>
        <end position="337"/>
    </location>
</feature>
<feature type="topological domain" description="Mitochondrial matrix" evidence="7">
    <location>
        <begin position="2"/>
        <end position="20"/>
    </location>
</feature>
<feature type="transmembrane region" description="Helical; Signal-anchor for type II membrane protein" evidence="1">
    <location>
        <begin position="21"/>
        <end position="40"/>
    </location>
</feature>
<feature type="topological domain" description="Cytoplasmic" evidence="7">
    <location>
        <begin position="41"/>
        <end position="337"/>
    </location>
</feature>
<feature type="domain" description="MOSC" evidence="2">
    <location>
        <begin position="187"/>
        <end position="335"/>
    </location>
</feature>
<feature type="region of interest" description="MOSC N-terminal region" evidence="11">
    <location>
        <begin position="93"/>
        <end position="183"/>
    </location>
</feature>
<feature type="binding site" evidence="11 20">
    <location>
        <position position="67"/>
    </location>
    <ligand>
        <name>Mo-molybdopterin</name>
        <dbReference type="ChEBI" id="CHEBI:71302"/>
    </ligand>
</feature>
<feature type="binding site" evidence="11 20">
    <location>
        <position position="68"/>
    </location>
    <ligand>
        <name>Mo-molybdopterin</name>
        <dbReference type="ChEBI" id="CHEBI:71302"/>
    </ligand>
</feature>
<feature type="binding site" evidence="11 20">
    <location>
        <position position="92"/>
    </location>
    <ligand>
        <name>Mo-molybdopterin</name>
        <dbReference type="ChEBI" id="CHEBI:71302"/>
    </ligand>
</feature>
<feature type="binding site" evidence="11 20">
    <location>
        <position position="210"/>
    </location>
    <ligand>
        <name>Mo-molybdopterin</name>
        <dbReference type="ChEBI" id="CHEBI:71302"/>
    </ligand>
</feature>
<feature type="binding site" evidence="11 20">
    <location>
        <position position="211"/>
    </location>
    <ligand>
        <name>Mo-molybdopterin</name>
        <dbReference type="ChEBI" id="CHEBI:71302"/>
    </ligand>
</feature>
<feature type="binding site" evidence="11 20">
    <location>
        <position position="238"/>
    </location>
    <ligand>
        <name>Mo-molybdopterin</name>
        <dbReference type="ChEBI" id="CHEBI:71302"/>
    </ligand>
</feature>
<feature type="binding site" evidence="11 20">
    <location>
        <position position="240"/>
    </location>
    <ligand>
        <name>Mo-molybdopterin</name>
        <dbReference type="ChEBI" id="CHEBI:71302"/>
    </ligand>
</feature>
<feature type="binding site" evidence="11 20">
    <location>
        <position position="271"/>
    </location>
    <ligand>
        <name>Mo-molybdopterin</name>
        <dbReference type="ChEBI" id="CHEBI:71302"/>
    </ligand>
</feature>
<feature type="binding site" evidence="11 20">
    <location>
        <position position="272"/>
    </location>
    <ligand>
        <name>Mo-molybdopterin</name>
        <dbReference type="ChEBI" id="CHEBI:71302"/>
    </ligand>
</feature>
<feature type="binding site" evidence="11 20">
    <location>
        <position position="273"/>
    </location>
    <ligand>
        <name>Mo-molybdopterin</name>
        <dbReference type="ChEBI" id="CHEBI:71302"/>
    </ligand>
    <ligandPart>
        <name>Mo</name>
        <dbReference type="ChEBI" id="CHEBI:28685"/>
    </ligandPart>
</feature>
<feature type="binding site" evidence="11 20">
    <location>
        <position position="317"/>
    </location>
    <ligand>
        <name>Mo-molybdopterin</name>
        <dbReference type="ChEBI" id="CHEBI:71302"/>
    </ligand>
</feature>
<feature type="lipid moiety-binding region" description="N-myristoyl glycine" evidence="9 10">
    <location>
        <position position="2"/>
    </location>
</feature>
<feature type="splice variant" id="VSP_022511" description="In isoform 3." evidence="14">
    <location>
        <begin position="1"/>
        <end position="102"/>
    </location>
</feature>
<feature type="splice variant" id="VSP_022512" description="In isoform 2 and isoform 3." evidence="14">
    <original>E</original>
    <variation>EVTLCPFGSFLGFDFFFK</variation>
    <location>
        <position position="251"/>
    </location>
</feature>
<feature type="sequence variant" id="VAR_062273" description="In dbSNP:rs72470572." evidence="12">
    <original>L</original>
    <variation>H</variation>
    <location>
        <position position="15"/>
    </location>
</feature>
<feature type="sequence variant" id="VAR_056941" description="No effect on binding of the molybdenum cofactor; no significant effect on catalytic efficiency toward benzamidoxime; no significant effect on affinity for benzamidoxime; dbSNP:rs12023067." evidence="8 12">
    <original>V</original>
    <variation>L</variation>
    <location>
        <position position="96"/>
    </location>
</feature>
<feature type="sequence variant" id="VAR_030129" description="No effect on binding of the molybdenum cofactor; no significant effect on catalytic efficiency toward benzamidoxime; no significant effect on affinity for benzamidoxime; dbSNP:rs2642438." evidence="3 4 8 12 13">
    <original>T</original>
    <variation>A</variation>
    <location>
        <position position="165"/>
    </location>
</feature>
<feature type="sequence variant" id="VAR_030130" description="No effect on binding of the molybdenum cofactor; no significant effect on catalytic efficiency toward benzamidoxime; no significant effect on affinity for benzamidoxime; dbSNP:rs17850677." evidence="4 8">
    <original>M</original>
    <variation>K</variation>
    <location>
        <position position="187"/>
    </location>
</feature>
<feature type="sequence variant" id="VAR_030131" description="No effect on binding of the molybdenum cofactor; no significant effect on catalytic efficiency toward benzamidoxime; no significant effect on affinity for benzamidoxime; dbSNP:rs3738178." evidence="8 12">
    <original>C</original>
    <variation>S</variation>
    <location>
        <position position="246"/>
    </location>
</feature>
<feature type="sequence variant" id="VAR_062274" description="No effect on binding of the molybdenum cofactor; no significant effect on catalytic efficiency toward benzamidoxime; no significant effect on affinity for benzamidoxime; dbSNP:rs72470601." evidence="8 12">
    <original>D</original>
    <variation>H</variation>
    <location>
        <position position="247"/>
    </location>
</feature>
<feature type="sequence variant" id="VAR_030132" description="No effect on binding of the molybdenum cofactor; no significant effect on catalytic efficiency toward benzamidoxime; no significant effect on affinity for benzamidoxime; dbSNP:rs2642419." evidence="8">
    <original>M</original>
    <variation>I</variation>
    <location>
        <position position="268"/>
    </location>
</feature>
<feature type="strand" evidence="21">
    <location>
        <begin position="53"/>
        <end position="63"/>
    </location>
</feature>
<feature type="strand" evidence="21">
    <location>
        <begin position="72"/>
        <end position="80"/>
    </location>
</feature>
<feature type="strand" evidence="21">
    <location>
        <begin position="83"/>
        <end position="86"/>
    </location>
</feature>
<feature type="strand" evidence="21">
    <location>
        <begin position="94"/>
        <end position="97"/>
    </location>
</feature>
<feature type="strand" evidence="21">
    <location>
        <begin position="101"/>
        <end position="103"/>
    </location>
</feature>
<feature type="turn" evidence="21">
    <location>
        <begin position="106"/>
        <end position="108"/>
    </location>
</feature>
<feature type="helix" evidence="21">
    <location>
        <begin position="110"/>
        <end position="114"/>
    </location>
</feature>
<feature type="strand" evidence="21">
    <location>
        <begin position="116"/>
        <end position="120"/>
    </location>
</feature>
<feature type="strand" evidence="21">
    <location>
        <begin position="123"/>
        <end position="127"/>
    </location>
</feature>
<feature type="strand" evidence="21">
    <location>
        <begin position="134"/>
        <end position="139"/>
    </location>
</feature>
<feature type="strand" evidence="21">
    <location>
        <begin position="146"/>
        <end position="151"/>
    </location>
</feature>
<feature type="strand" evidence="21">
    <location>
        <begin position="154"/>
        <end position="160"/>
    </location>
</feature>
<feature type="helix" evidence="21">
    <location>
        <begin position="163"/>
        <end position="173"/>
    </location>
</feature>
<feature type="strand" evidence="21">
    <location>
        <begin position="179"/>
        <end position="182"/>
    </location>
</feature>
<feature type="helix" evidence="21">
    <location>
        <begin position="192"/>
        <end position="195"/>
    </location>
</feature>
<feature type="strand" evidence="21">
    <location>
        <begin position="205"/>
        <end position="210"/>
    </location>
</feature>
<feature type="strand" evidence="21">
    <location>
        <begin position="212"/>
        <end position="217"/>
    </location>
</feature>
<feature type="helix" evidence="21">
    <location>
        <begin position="218"/>
        <end position="225"/>
    </location>
</feature>
<feature type="helix" evidence="21">
    <location>
        <begin position="234"/>
        <end position="237"/>
    </location>
</feature>
<feature type="strand" evidence="21">
    <location>
        <begin position="240"/>
        <end position="246"/>
    </location>
</feature>
<feature type="helix" evidence="21">
    <location>
        <begin position="250"/>
        <end position="253"/>
    </location>
</feature>
<feature type="strand" evidence="21">
    <location>
        <begin position="256"/>
        <end position="259"/>
    </location>
</feature>
<feature type="strand" evidence="21">
    <location>
        <begin position="262"/>
        <end position="271"/>
    </location>
</feature>
<feature type="helix" evidence="21">
    <location>
        <begin position="274"/>
        <end position="277"/>
    </location>
</feature>
<feature type="turn" evidence="21">
    <location>
        <begin position="280"/>
        <end position="282"/>
    </location>
</feature>
<feature type="helix" evidence="21">
    <location>
        <begin position="291"/>
        <end position="297"/>
    </location>
</feature>
<feature type="helix" evidence="21">
    <location>
        <begin position="302"/>
        <end position="304"/>
    </location>
</feature>
<feature type="turn" evidence="21">
    <location>
        <begin position="305"/>
        <end position="307"/>
    </location>
</feature>
<feature type="strand" evidence="21">
    <location>
        <begin position="308"/>
        <end position="310"/>
    </location>
</feature>
<feature type="strand" evidence="21">
    <location>
        <begin position="313"/>
        <end position="322"/>
    </location>
</feature>
<feature type="strand" evidence="21">
    <location>
        <begin position="324"/>
        <end position="327"/>
    </location>
</feature>
<feature type="strand" evidence="21">
    <location>
        <begin position="331"/>
        <end position="334"/>
    </location>
</feature>
<proteinExistence type="evidence at protein level"/>
<comment type="function">
    <text evidence="5 6 11">Catalyzes the reduction of N-oxygenated molecules, acting as a counterpart of cytochrome P450 and flavin-containing monooxygenases in metabolic cycles (PubMed:19053771, PubMed:21029045, PubMed:30397129). As a component of prodrug-converting system, reduces a multitude of N-hydroxylated prodrugs particularly amidoximes, leading to increased drug bioavailability (PubMed:19053771). May be involved in mitochondrial N(omega)-hydroxy-L-arginine (NOHA) reduction, regulating endogenous nitric oxide levels and biosynthesis (PubMed:21029045). Postulated to cleave the N-OH bond of N-hydroxylated substrates in concert with electron transfer from NADH to cytochrome b5 reductase then to cytochrome b5, the ultimate electron donor that primes the active site for substrate reduction (PubMed:19053771, PubMed:21029045).</text>
</comment>
<comment type="catalytic activity">
    <reaction evidence="6">
        <text>N(omega)-hydroxy-L-arginine + 2 Fe(II)-[cytochrome b5] + 2 H(+) = L-arginine + 2 Fe(III)-[cytochrome b5] + H2O</text>
        <dbReference type="Rhea" id="RHEA:61644"/>
        <dbReference type="Rhea" id="RHEA-COMP:10438"/>
        <dbReference type="Rhea" id="RHEA-COMP:10439"/>
        <dbReference type="ChEBI" id="CHEBI:15377"/>
        <dbReference type="ChEBI" id="CHEBI:15378"/>
        <dbReference type="ChEBI" id="CHEBI:29033"/>
        <dbReference type="ChEBI" id="CHEBI:29034"/>
        <dbReference type="ChEBI" id="CHEBI:32682"/>
        <dbReference type="ChEBI" id="CHEBI:60107"/>
    </reaction>
    <physiologicalReaction direction="left-to-right" evidence="18">
        <dbReference type="Rhea" id="RHEA:61645"/>
    </physiologicalReaction>
</comment>
<comment type="cofactor">
    <cofactor evidence="5 8 11">
        <name>Mo-molybdopterin</name>
        <dbReference type="ChEBI" id="CHEBI:71302"/>
    </cofactor>
    <text evidence="5 8 11">Binds 1 Mo-molybdopterin (Mo-MPT) cofactor per subunit.</text>
</comment>
<comment type="biophysicochemical properties">
    <kinetics>
        <KM evidence="6">180 uM for benzamidoxime</KM>
        <KM evidence="6">86 uM for NOHA</KM>
        <KM evidence="6">272 uM for NHAM</KM>
        <Vmax evidence="6">34.0 nmol/min/mg enzyme toward benzamidoxime</Vmax>
        <Vmax evidence="8">105.0 nmol/min/mg enzyme toward benzamidoxime (at pH 6.0 and 37 degrees Celsius)</Vmax>
        <Vmax evidence="6">55.0 nmol/min/mg enzyme toward NOHA</Vmax>
        <Vmax evidence="6">43.0 nmol/min/mg enzyme toward NHAM</Vmax>
    </kinetics>
</comment>
<comment type="subunit">
    <text>Component of a complex composed of cytochrome b5, NADH-cytochrome b5 reductase and MTARC1.</text>
</comment>
<comment type="interaction">
    <interactant intactId="EBI-11903927">
        <id>Q5VT66</id>
    </interactant>
    <interactant intactId="EBI-10182490">
        <id>O15197-2</id>
        <label>EPHB6</label>
    </interactant>
    <organismsDiffer>false</organismsDiffer>
    <experiments>3</experiments>
</comment>
<comment type="interaction">
    <interactant intactId="EBI-11903927">
        <id>Q5VT66</id>
    </interactant>
    <interactant intactId="EBI-2585120">
        <id>Q9BSU3</id>
        <label>NAA11</label>
    </interactant>
    <organismsDiffer>false</organismsDiffer>
    <experiments>3</experiments>
</comment>
<comment type="subcellular location">
    <subcellularLocation>
        <location evidence="7">Mitochondrion outer membrane</location>
        <topology evidence="7">Single-pass type II membrane protein</topology>
    </subcellularLocation>
    <subcellularLocation>
        <location evidence="17">Membrane</location>
        <topology evidence="17">Lipid-anchor</topology>
    </subcellularLocation>
    <text>Mitochondrial import is mediated by AA 1-40 and requires ATP.</text>
</comment>
<comment type="alternative products">
    <event type="alternative splicing"/>
    <isoform>
        <id>Q5VT66-1</id>
        <name>1</name>
        <sequence type="displayed"/>
    </isoform>
    <isoform>
        <id>Q5VT66-2</id>
        <name>2</name>
        <sequence type="described" ref="VSP_022512"/>
    </isoform>
    <isoform>
        <id>Q5VT66-3</id>
        <name>3</name>
        <sequence type="described" ref="VSP_022511 VSP_022512"/>
    </isoform>
</comment>
<comment type="domain">
    <text evidence="11">Comprises two structural domains, the molybdenum cofactor/Moco sulfurase C-terminal (MOSC) domain and the MOSC N-terminal region, forming a cleft that accommodates Moco. The MOSC domain, which contains a large seven-stranded mostly antiparallel beta-barrel, engages multiple interactions with Moco both pterin ring and phosphate group, allowing for a tight coordination of Moco within the core of the enzyme.</text>
</comment>
<comment type="sequence caution" evidence="17">
    <conflict type="frameshift">
        <sequence resource="EMBL-CDS" id="BAB15333"/>
    </conflict>
</comment>
<dbReference type="EC" id="1.7.-.-" evidence="6"/>
<dbReference type="EMBL" id="AK026043">
    <property type="protein sequence ID" value="BAB15333.1"/>
    <property type="status" value="ALT_FRAME"/>
    <property type="molecule type" value="mRNA"/>
</dbReference>
<dbReference type="EMBL" id="AK094105">
    <property type="protein sequence ID" value="BAC04286.1"/>
    <property type="molecule type" value="mRNA"/>
</dbReference>
<dbReference type="EMBL" id="AK290812">
    <property type="protein sequence ID" value="BAF83501.1"/>
    <property type="molecule type" value="mRNA"/>
</dbReference>
<dbReference type="EMBL" id="EU563849">
    <property type="protein sequence ID" value="ACB21046.1"/>
    <property type="molecule type" value="Genomic_DNA"/>
</dbReference>
<dbReference type="EMBL" id="AL445423">
    <property type="status" value="NOT_ANNOTATED_CDS"/>
    <property type="molecule type" value="Genomic_DNA"/>
</dbReference>
<dbReference type="EMBL" id="AL606726">
    <property type="status" value="NOT_ANNOTATED_CDS"/>
    <property type="molecule type" value="Genomic_DNA"/>
</dbReference>
<dbReference type="EMBL" id="CH471100">
    <property type="protein sequence ID" value="EAW93291.1"/>
    <property type="molecule type" value="Genomic_DNA"/>
</dbReference>
<dbReference type="EMBL" id="BC010619">
    <property type="protein sequence ID" value="AAH10619.1"/>
    <property type="molecule type" value="mRNA"/>
</dbReference>
<dbReference type="CCDS" id="CCDS1526.1">
    <molecule id="Q5VT66-1"/>
</dbReference>
<dbReference type="RefSeq" id="NP_073583.3">
    <molecule id="Q5VT66-1"/>
    <property type="nucleotide sequence ID" value="NM_022746.3"/>
</dbReference>
<dbReference type="RefSeq" id="XP_011508202.1">
    <molecule id="Q5VT66-2"/>
    <property type="nucleotide sequence ID" value="XM_011509900.4"/>
</dbReference>
<dbReference type="RefSeq" id="XP_011508206.1">
    <molecule id="Q5VT66-3"/>
    <property type="nucleotide sequence ID" value="XM_011509904.4"/>
</dbReference>
<dbReference type="PDB" id="6FW2">
    <property type="method" value="X-ray"/>
    <property type="resolution" value="1.78 A"/>
    <property type="chains" value="A=53-337"/>
</dbReference>
<dbReference type="PDBsum" id="6FW2"/>
<dbReference type="SMR" id="Q5VT66"/>
<dbReference type="BioGRID" id="122271">
    <property type="interactions" value="75"/>
</dbReference>
<dbReference type="FunCoup" id="Q5VT66">
    <property type="interactions" value="583"/>
</dbReference>
<dbReference type="IntAct" id="Q5VT66">
    <property type="interactions" value="30"/>
</dbReference>
<dbReference type="MINT" id="Q5VT66"/>
<dbReference type="STRING" id="9606.ENSP00000355877"/>
<dbReference type="ChEMBL" id="CHEMBL3706559"/>
<dbReference type="iPTMnet" id="Q5VT66"/>
<dbReference type="PhosphoSitePlus" id="Q5VT66"/>
<dbReference type="SwissPalm" id="Q5VT66"/>
<dbReference type="BioMuta" id="MARC1"/>
<dbReference type="DMDM" id="74746896"/>
<dbReference type="jPOST" id="Q5VT66"/>
<dbReference type="MassIVE" id="Q5VT66"/>
<dbReference type="PaxDb" id="9606-ENSP00000355877"/>
<dbReference type="PeptideAtlas" id="Q5VT66"/>
<dbReference type="ProteomicsDB" id="65307">
    <molecule id="Q5VT66-1"/>
</dbReference>
<dbReference type="ProteomicsDB" id="65308">
    <molecule id="Q5VT66-2"/>
</dbReference>
<dbReference type="ProteomicsDB" id="65309">
    <molecule id="Q5VT66-3"/>
</dbReference>
<dbReference type="Pumba" id="Q5VT66"/>
<dbReference type="Antibodypedia" id="34627">
    <property type="antibodies" value="114 antibodies from 22 providers"/>
</dbReference>
<dbReference type="DNASU" id="64757"/>
<dbReference type="Ensembl" id="ENST00000366910.10">
    <molecule id="Q5VT66-1"/>
    <property type="protein sequence ID" value="ENSP00000355877.5"/>
    <property type="gene ID" value="ENSG00000186205.14"/>
</dbReference>
<dbReference type="GeneID" id="64757"/>
<dbReference type="KEGG" id="hsa:64757"/>
<dbReference type="MANE-Select" id="ENST00000366910.10">
    <property type="protein sequence ID" value="ENSP00000355877.5"/>
    <property type="RefSeq nucleotide sequence ID" value="NM_022746.4"/>
    <property type="RefSeq protein sequence ID" value="NP_073583.3"/>
</dbReference>
<dbReference type="UCSC" id="uc001hms.4">
    <molecule id="Q5VT66-1"/>
    <property type="organism name" value="human"/>
</dbReference>
<dbReference type="AGR" id="HGNC:26189"/>
<dbReference type="CTD" id="64757"/>
<dbReference type="DisGeNET" id="64757"/>
<dbReference type="GeneCards" id="MTARC1"/>
<dbReference type="HGNC" id="HGNC:26189">
    <property type="gene designation" value="MTARC1"/>
</dbReference>
<dbReference type="HPA" id="ENSG00000186205">
    <property type="expression patterns" value="Tissue enhanced (adipose tissue, breast, liver)"/>
</dbReference>
<dbReference type="MIM" id="614126">
    <property type="type" value="gene"/>
</dbReference>
<dbReference type="neXtProt" id="NX_Q5VT66"/>
<dbReference type="OpenTargets" id="ENSG00000186205"/>
<dbReference type="VEuPathDB" id="HostDB:ENSG00000186205"/>
<dbReference type="eggNOG" id="KOG2362">
    <property type="taxonomic scope" value="Eukaryota"/>
</dbReference>
<dbReference type="GeneTree" id="ENSGT00940000162410"/>
<dbReference type="HOGENOM" id="CLU_028286_6_0_1"/>
<dbReference type="InParanoid" id="Q5VT66"/>
<dbReference type="OMA" id="ARQYPQM"/>
<dbReference type="OrthoDB" id="17255at2759"/>
<dbReference type="PAN-GO" id="Q5VT66">
    <property type="GO annotations" value="4 GO annotations based on evolutionary models"/>
</dbReference>
<dbReference type="PhylomeDB" id="Q5VT66"/>
<dbReference type="TreeFam" id="TF316807"/>
<dbReference type="BRENDA" id="1.16.98.B1">
    <property type="organism ID" value="2681"/>
</dbReference>
<dbReference type="BRENDA" id="1.7.2.1">
    <property type="organism ID" value="2681"/>
</dbReference>
<dbReference type="PathwayCommons" id="Q5VT66"/>
<dbReference type="Reactome" id="R-HSA-211945">
    <property type="pathway name" value="Phase I - Functionalization of compounds"/>
</dbReference>
<dbReference type="SABIO-RK" id="Q5VT66"/>
<dbReference type="SignaLink" id="Q5VT66"/>
<dbReference type="SIGNOR" id="Q5VT66"/>
<dbReference type="BioGRID-ORCS" id="64757">
    <property type="hits" value="4 hits in 821 CRISPR screens"/>
</dbReference>
<dbReference type="ChiTaRS" id="MARC1">
    <property type="organism name" value="human"/>
</dbReference>
<dbReference type="GenomeRNAi" id="64757"/>
<dbReference type="Pharos" id="Q5VT66">
    <property type="development level" value="Tbio"/>
</dbReference>
<dbReference type="PRO" id="PR:Q5VT66"/>
<dbReference type="Proteomes" id="UP000005640">
    <property type="component" value="Chromosome 1"/>
</dbReference>
<dbReference type="RNAct" id="Q5VT66">
    <property type="molecule type" value="protein"/>
</dbReference>
<dbReference type="Bgee" id="ENSG00000186205">
    <property type="expression patterns" value="Expressed in adipose tissue and 145 other cell types or tissues"/>
</dbReference>
<dbReference type="ExpressionAtlas" id="Q5VT66">
    <property type="expression patterns" value="baseline and differential"/>
</dbReference>
<dbReference type="GO" id="GO:0005741">
    <property type="term" value="C:mitochondrial outer membrane"/>
    <property type="evidence" value="ECO:0000304"/>
    <property type="project" value="Reactome"/>
</dbReference>
<dbReference type="GO" id="GO:0005739">
    <property type="term" value="C:mitochondrion"/>
    <property type="evidence" value="ECO:0000314"/>
    <property type="project" value="HPA"/>
</dbReference>
<dbReference type="GO" id="GO:1903958">
    <property type="term" value="C:nitric-oxide synthase complex"/>
    <property type="evidence" value="ECO:0000314"/>
    <property type="project" value="FlyBase"/>
</dbReference>
<dbReference type="GO" id="GO:0030151">
    <property type="term" value="F:molybdenum ion binding"/>
    <property type="evidence" value="ECO:0000314"/>
    <property type="project" value="UniProtKB"/>
</dbReference>
<dbReference type="GO" id="GO:0043546">
    <property type="term" value="F:molybdopterin cofactor binding"/>
    <property type="evidence" value="ECO:0000314"/>
    <property type="project" value="UniProtKB"/>
</dbReference>
<dbReference type="GO" id="GO:0008940">
    <property type="term" value="F:nitrate reductase activity"/>
    <property type="evidence" value="ECO:0000314"/>
    <property type="project" value="UniProtKB"/>
</dbReference>
<dbReference type="GO" id="GO:0098809">
    <property type="term" value="F:nitrite reductase activity"/>
    <property type="evidence" value="ECO:0000314"/>
    <property type="project" value="FlyBase"/>
</dbReference>
<dbReference type="GO" id="GO:0016661">
    <property type="term" value="F:oxidoreductase activity, acting on other nitrogenous compounds as donors"/>
    <property type="evidence" value="ECO:0000314"/>
    <property type="project" value="FlyBase"/>
</dbReference>
<dbReference type="GO" id="GO:0030170">
    <property type="term" value="F:pyridoxal phosphate binding"/>
    <property type="evidence" value="ECO:0007669"/>
    <property type="project" value="InterPro"/>
</dbReference>
<dbReference type="GO" id="GO:0070458">
    <property type="term" value="P:cellular detoxification of nitrogen compound"/>
    <property type="evidence" value="ECO:0000315"/>
    <property type="project" value="FlyBase"/>
</dbReference>
<dbReference type="GO" id="GO:0051410">
    <property type="term" value="P:detoxification of nitrogen compound"/>
    <property type="evidence" value="ECO:0000303"/>
    <property type="project" value="UniProtKB"/>
</dbReference>
<dbReference type="GO" id="GO:0042126">
    <property type="term" value="P:nitrate metabolic process"/>
    <property type="evidence" value="ECO:0000314"/>
    <property type="project" value="UniProtKB"/>
</dbReference>
<dbReference type="GO" id="GO:0006809">
    <property type="term" value="P:nitric oxide biosynthetic process"/>
    <property type="evidence" value="ECO:0000314"/>
    <property type="project" value="FlyBase"/>
</dbReference>
<dbReference type="InterPro" id="IPR005302">
    <property type="entry name" value="MoCF_Sase_C"/>
</dbReference>
<dbReference type="InterPro" id="IPR005303">
    <property type="entry name" value="MOCOS_middle"/>
</dbReference>
<dbReference type="InterPro" id="IPR011037">
    <property type="entry name" value="Pyrv_Knase-like_insert_dom_sf"/>
</dbReference>
<dbReference type="PANTHER" id="PTHR14237:SF25">
    <property type="entry name" value="MITOCHONDRIAL AMIDOXIME-REDUCING COMPONENT 1"/>
    <property type="match status" value="1"/>
</dbReference>
<dbReference type="PANTHER" id="PTHR14237">
    <property type="entry name" value="MOLYBDOPTERIN COFACTOR SULFURASE MOSC"/>
    <property type="match status" value="1"/>
</dbReference>
<dbReference type="Pfam" id="PF03473">
    <property type="entry name" value="MOSC"/>
    <property type="match status" value="1"/>
</dbReference>
<dbReference type="Pfam" id="PF03476">
    <property type="entry name" value="MOSC_N"/>
    <property type="match status" value="1"/>
</dbReference>
<dbReference type="SUPFAM" id="SSF141673">
    <property type="entry name" value="MOSC N-terminal domain-like"/>
    <property type="match status" value="1"/>
</dbReference>
<dbReference type="SUPFAM" id="SSF50800">
    <property type="entry name" value="PK beta-barrel domain-like"/>
    <property type="match status" value="1"/>
</dbReference>
<dbReference type="PROSITE" id="PS51340">
    <property type="entry name" value="MOSC"/>
    <property type="match status" value="1"/>
</dbReference>
<name>MARC1_HUMAN</name>
<reference key="1">
    <citation type="journal article" date="2004" name="Nat. Genet.">
        <title>Complete sequencing and characterization of 21,243 full-length human cDNAs.</title>
        <authorList>
            <person name="Ota T."/>
            <person name="Suzuki Y."/>
            <person name="Nishikawa T."/>
            <person name="Otsuki T."/>
            <person name="Sugiyama T."/>
            <person name="Irie R."/>
            <person name="Wakamatsu A."/>
            <person name="Hayashi K."/>
            <person name="Sato H."/>
            <person name="Nagai K."/>
            <person name="Kimura K."/>
            <person name="Makita H."/>
            <person name="Sekine M."/>
            <person name="Obayashi M."/>
            <person name="Nishi T."/>
            <person name="Shibahara T."/>
            <person name="Tanaka T."/>
            <person name="Ishii S."/>
            <person name="Yamamoto J."/>
            <person name="Saito K."/>
            <person name="Kawai Y."/>
            <person name="Isono Y."/>
            <person name="Nakamura Y."/>
            <person name="Nagahari K."/>
            <person name="Murakami K."/>
            <person name="Yasuda T."/>
            <person name="Iwayanagi T."/>
            <person name="Wagatsuma M."/>
            <person name="Shiratori A."/>
            <person name="Sudo H."/>
            <person name="Hosoiri T."/>
            <person name="Kaku Y."/>
            <person name="Kodaira H."/>
            <person name="Kondo H."/>
            <person name="Sugawara M."/>
            <person name="Takahashi M."/>
            <person name="Kanda K."/>
            <person name="Yokoi T."/>
            <person name="Furuya T."/>
            <person name="Kikkawa E."/>
            <person name="Omura Y."/>
            <person name="Abe K."/>
            <person name="Kamihara K."/>
            <person name="Katsuta N."/>
            <person name="Sato K."/>
            <person name="Tanikawa M."/>
            <person name="Yamazaki M."/>
            <person name="Ninomiya K."/>
            <person name="Ishibashi T."/>
            <person name="Yamashita H."/>
            <person name="Murakawa K."/>
            <person name="Fujimori K."/>
            <person name="Tanai H."/>
            <person name="Kimata M."/>
            <person name="Watanabe M."/>
            <person name="Hiraoka S."/>
            <person name="Chiba Y."/>
            <person name="Ishida S."/>
            <person name="Ono Y."/>
            <person name="Takiguchi S."/>
            <person name="Watanabe S."/>
            <person name="Yosida M."/>
            <person name="Hotuta T."/>
            <person name="Kusano J."/>
            <person name="Kanehori K."/>
            <person name="Takahashi-Fujii A."/>
            <person name="Hara H."/>
            <person name="Tanase T.-O."/>
            <person name="Nomura Y."/>
            <person name="Togiya S."/>
            <person name="Komai F."/>
            <person name="Hara R."/>
            <person name="Takeuchi K."/>
            <person name="Arita M."/>
            <person name="Imose N."/>
            <person name="Musashino K."/>
            <person name="Yuuki H."/>
            <person name="Oshima A."/>
            <person name="Sasaki N."/>
            <person name="Aotsuka S."/>
            <person name="Yoshikawa Y."/>
            <person name="Matsunawa H."/>
            <person name="Ichihara T."/>
            <person name="Shiohata N."/>
            <person name="Sano S."/>
            <person name="Moriya S."/>
            <person name="Momiyama H."/>
            <person name="Satoh N."/>
            <person name="Takami S."/>
            <person name="Terashima Y."/>
            <person name="Suzuki O."/>
            <person name="Nakagawa S."/>
            <person name="Senoh A."/>
            <person name="Mizoguchi H."/>
            <person name="Goto Y."/>
            <person name="Shimizu F."/>
            <person name="Wakebe H."/>
            <person name="Hishigaki H."/>
            <person name="Watanabe T."/>
            <person name="Sugiyama A."/>
            <person name="Takemoto M."/>
            <person name="Kawakami B."/>
            <person name="Yamazaki M."/>
            <person name="Watanabe K."/>
            <person name="Kumagai A."/>
            <person name="Itakura S."/>
            <person name="Fukuzumi Y."/>
            <person name="Fujimori Y."/>
            <person name="Komiyama M."/>
            <person name="Tashiro H."/>
            <person name="Tanigami A."/>
            <person name="Fujiwara T."/>
            <person name="Ono T."/>
            <person name="Yamada K."/>
            <person name="Fujii Y."/>
            <person name="Ozaki K."/>
            <person name="Hirao M."/>
            <person name="Ohmori Y."/>
            <person name="Kawabata A."/>
            <person name="Hikiji T."/>
            <person name="Kobatake N."/>
            <person name="Inagaki H."/>
            <person name="Ikema Y."/>
            <person name="Okamoto S."/>
            <person name="Okitani R."/>
            <person name="Kawakami T."/>
            <person name="Noguchi S."/>
            <person name="Itoh T."/>
            <person name="Shigeta K."/>
            <person name="Senba T."/>
            <person name="Matsumura K."/>
            <person name="Nakajima Y."/>
            <person name="Mizuno T."/>
            <person name="Morinaga M."/>
            <person name="Sasaki M."/>
            <person name="Togashi T."/>
            <person name="Oyama M."/>
            <person name="Hata H."/>
            <person name="Watanabe M."/>
            <person name="Komatsu T."/>
            <person name="Mizushima-Sugano J."/>
            <person name="Satoh T."/>
            <person name="Shirai Y."/>
            <person name="Takahashi Y."/>
            <person name="Nakagawa K."/>
            <person name="Okumura K."/>
            <person name="Nagase T."/>
            <person name="Nomura N."/>
            <person name="Kikuchi H."/>
            <person name="Masuho Y."/>
            <person name="Yamashita R."/>
            <person name="Nakai K."/>
            <person name="Yada T."/>
            <person name="Nakamura Y."/>
            <person name="Ohara O."/>
            <person name="Isogai T."/>
            <person name="Sugano S."/>
        </authorList>
    </citation>
    <scope>NUCLEOTIDE SEQUENCE [LARGE SCALE MRNA] (ISOFORMS 1 AND 3)</scope>
    <scope>VARIANT ALA-165</scope>
    <source>
        <tissue>Adrenal gland</tissue>
        <tissue>Kidney</tissue>
    </source>
</reference>
<reference key="2">
    <citation type="submission" date="2008-03" db="EMBL/GenBank/DDBJ databases">
        <authorList>
            <consortium name="NIEHS SNPs program"/>
        </authorList>
    </citation>
    <scope>NUCLEOTIDE SEQUENCE [GENOMIC DNA]</scope>
    <scope>VARIANTS HIS-15; LEU-96; ALA-165; SER-246 AND HIS-247</scope>
</reference>
<reference key="3">
    <citation type="journal article" date="2006" name="Nature">
        <title>The DNA sequence and biological annotation of human chromosome 1.</title>
        <authorList>
            <person name="Gregory S.G."/>
            <person name="Barlow K.F."/>
            <person name="McLay K.E."/>
            <person name="Kaul R."/>
            <person name="Swarbreck D."/>
            <person name="Dunham A."/>
            <person name="Scott C.E."/>
            <person name="Howe K.L."/>
            <person name="Woodfine K."/>
            <person name="Spencer C.C.A."/>
            <person name="Jones M.C."/>
            <person name="Gillson C."/>
            <person name="Searle S."/>
            <person name="Zhou Y."/>
            <person name="Kokocinski F."/>
            <person name="McDonald L."/>
            <person name="Evans R."/>
            <person name="Phillips K."/>
            <person name="Atkinson A."/>
            <person name="Cooper R."/>
            <person name="Jones C."/>
            <person name="Hall R.E."/>
            <person name="Andrews T.D."/>
            <person name="Lloyd C."/>
            <person name="Ainscough R."/>
            <person name="Almeida J.P."/>
            <person name="Ambrose K.D."/>
            <person name="Anderson F."/>
            <person name="Andrew R.W."/>
            <person name="Ashwell R.I.S."/>
            <person name="Aubin K."/>
            <person name="Babbage A.K."/>
            <person name="Bagguley C.L."/>
            <person name="Bailey J."/>
            <person name="Beasley H."/>
            <person name="Bethel G."/>
            <person name="Bird C.P."/>
            <person name="Bray-Allen S."/>
            <person name="Brown J.Y."/>
            <person name="Brown A.J."/>
            <person name="Buckley D."/>
            <person name="Burton J."/>
            <person name="Bye J."/>
            <person name="Carder C."/>
            <person name="Chapman J.C."/>
            <person name="Clark S.Y."/>
            <person name="Clarke G."/>
            <person name="Clee C."/>
            <person name="Cobley V."/>
            <person name="Collier R.E."/>
            <person name="Corby N."/>
            <person name="Coville G.J."/>
            <person name="Davies J."/>
            <person name="Deadman R."/>
            <person name="Dunn M."/>
            <person name="Earthrowl M."/>
            <person name="Ellington A.G."/>
            <person name="Errington H."/>
            <person name="Frankish A."/>
            <person name="Frankland J."/>
            <person name="French L."/>
            <person name="Garner P."/>
            <person name="Garnett J."/>
            <person name="Gay L."/>
            <person name="Ghori M.R.J."/>
            <person name="Gibson R."/>
            <person name="Gilby L.M."/>
            <person name="Gillett W."/>
            <person name="Glithero R.J."/>
            <person name="Grafham D.V."/>
            <person name="Griffiths C."/>
            <person name="Griffiths-Jones S."/>
            <person name="Grocock R."/>
            <person name="Hammond S."/>
            <person name="Harrison E.S.I."/>
            <person name="Hart E."/>
            <person name="Haugen E."/>
            <person name="Heath P.D."/>
            <person name="Holmes S."/>
            <person name="Holt K."/>
            <person name="Howden P.J."/>
            <person name="Hunt A.R."/>
            <person name="Hunt S.E."/>
            <person name="Hunter G."/>
            <person name="Isherwood J."/>
            <person name="James R."/>
            <person name="Johnson C."/>
            <person name="Johnson D."/>
            <person name="Joy A."/>
            <person name="Kay M."/>
            <person name="Kershaw J.K."/>
            <person name="Kibukawa M."/>
            <person name="Kimberley A.M."/>
            <person name="King A."/>
            <person name="Knights A.J."/>
            <person name="Lad H."/>
            <person name="Laird G."/>
            <person name="Lawlor S."/>
            <person name="Leongamornlert D.A."/>
            <person name="Lloyd D.M."/>
            <person name="Loveland J."/>
            <person name="Lovell J."/>
            <person name="Lush M.J."/>
            <person name="Lyne R."/>
            <person name="Martin S."/>
            <person name="Mashreghi-Mohammadi M."/>
            <person name="Matthews L."/>
            <person name="Matthews N.S.W."/>
            <person name="McLaren S."/>
            <person name="Milne S."/>
            <person name="Mistry S."/>
            <person name="Moore M.J.F."/>
            <person name="Nickerson T."/>
            <person name="O'Dell C.N."/>
            <person name="Oliver K."/>
            <person name="Palmeiri A."/>
            <person name="Palmer S.A."/>
            <person name="Parker A."/>
            <person name="Patel D."/>
            <person name="Pearce A.V."/>
            <person name="Peck A.I."/>
            <person name="Pelan S."/>
            <person name="Phelps K."/>
            <person name="Phillimore B.J."/>
            <person name="Plumb R."/>
            <person name="Rajan J."/>
            <person name="Raymond C."/>
            <person name="Rouse G."/>
            <person name="Saenphimmachak C."/>
            <person name="Sehra H.K."/>
            <person name="Sheridan E."/>
            <person name="Shownkeen R."/>
            <person name="Sims S."/>
            <person name="Skuce C.D."/>
            <person name="Smith M."/>
            <person name="Steward C."/>
            <person name="Subramanian S."/>
            <person name="Sycamore N."/>
            <person name="Tracey A."/>
            <person name="Tromans A."/>
            <person name="Van Helmond Z."/>
            <person name="Wall M."/>
            <person name="Wallis J.M."/>
            <person name="White S."/>
            <person name="Whitehead S.L."/>
            <person name="Wilkinson J.E."/>
            <person name="Willey D.L."/>
            <person name="Williams H."/>
            <person name="Wilming L."/>
            <person name="Wray P.W."/>
            <person name="Wu Z."/>
            <person name="Coulson A."/>
            <person name="Vaudin M."/>
            <person name="Sulston J.E."/>
            <person name="Durbin R.M."/>
            <person name="Hubbard T."/>
            <person name="Wooster R."/>
            <person name="Dunham I."/>
            <person name="Carter N.P."/>
            <person name="McVean G."/>
            <person name="Ross M.T."/>
            <person name="Harrow J."/>
            <person name="Olson M.V."/>
            <person name="Beck S."/>
            <person name="Rogers J."/>
            <person name="Bentley D.R."/>
        </authorList>
    </citation>
    <scope>NUCLEOTIDE SEQUENCE [LARGE SCALE GENOMIC DNA]</scope>
    <scope>ALTERNATIVE SPLICING (ISOFORMS 1 AND 2)</scope>
</reference>
<reference key="4">
    <citation type="submission" date="2005-09" db="EMBL/GenBank/DDBJ databases">
        <authorList>
            <person name="Mural R.J."/>
            <person name="Istrail S."/>
            <person name="Sutton G.G."/>
            <person name="Florea L."/>
            <person name="Halpern A.L."/>
            <person name="Mobarry C.M."/>
            <person name="Lippert R."/>
            <person name="Walenz B."/>
            <person name="Shatkay H."/>
            <person name="Dew I."/>
            <person name="Miller J.R."/>
            <person name="Flanigan M.J."/>
            <person name="Edwards N.J."/>
            <person name="Bolanos R."/>
            <person name="Fasulo D."/>
            <person name="Halldorsson B.V."/>
            <person name="Hannenhalli S."/>
            <person name="Turner R."/>
            <person name="Yooseph S."/>
            <person name="Lu F."/>
            <person name="Nusskern D.R."/>
            <person name="Shue B.C."/>
            <person name="Zheng X.H."/>
            <person name="Zhong F."/>
            <person name="Delcher A.L."/>
            <person name="Huson D.H."/>
            <person name="Kravitz S.A."/>
            <person name="Mouchard L."/>
            <person name="Reinert K."/>
            <person name="Remington K.A."/>
            <person name="Clark A.G."/>
            <person name="Waterman M.S."/>
            <person name="Eichler E.E."/>
            <person name="Adams M.D."/>
            <person name="Hunkapiller M.W."/>
            <person name="Myers E.W."/>
            <person name="Venter J.C."/>
        </authorList>
    </citation>
    <scope>NUCLEOTIDE SEQUENCE [LARGE SCALE GENOMIC DNA]</scope>
    <scope>VARIANT ALA-165</scope>
</reference>
<reference key="5">
    <citation type="journal article" date="2004" name="Genome Res.">
        <title>The status, quality, and expansion of the NIH full-length cDNA project: the Mammalian Gene Collection (MGC).</title>
        <authorList>
            <consortium name="The MGC Project Team"/>
        </authorList>
    </citation>
    <scope>NUCLEOTIDE SEQUENCE [LARGE SCALE MRNA] (ISOFORM 1)</scope>
    <scope>VARIANTS ALA-165 AND LYS-187</scope>
    <source>
        <tissue>Eye</tissue>
    </source>
</reference>
<reference key="6">
    <citation type="journal article" date="2008" name="J. Med. Chem.">
        <title>The fourth molybdenum containing enzyme mARC: cloning and involvement in the activation of N-hydroxylated prodrugs.</title>
        <authorList>
            <person name="Gruenewald S."/>
            <person name="Wahl B."/>
            <person name="Bittner F."/>
            <person name="Hungeling H."/>
            <person name="Kanzow S."/>
            <person name="Kotthaus J."/>
            <person name="Schwering U."/>
            <person name="Mendel R.R."/>
            <person name="Clement B."/>
        </authorList>
    </citation>
    <scope>FUNCTION</scope>
    <scope>COFACTOR</scope>
</reference>
<reference key="7">
    <citation type="journal article" date="2011" name="BMC Syst. Biol.">
        <title>Initial characterization of the human central proteome.</title>
        <authorList>
            <person name="Burkard T.R."/>
            <person name="Planyavsky M."/>
            <person name="Kaupe I."/>
            <person name="Breitwieser F.P."/>
            <person name="Buerckstuemmer T."/>
            <person name="Bennett K.L."/>
            <person name="Superti-Furga G."/>
            <person name="Colinge J."/>
        </authorList>
    </citation>
    <scope>IDENTIFICATION BY MASS SPECTROMETRY [LARGE SCALE ANALYSIS]</scope>
</reference>
<reference key="8">
    <citation type="journal article" date="2011" name="Biochem. J.">
        <title>Reduction of N(omega)-hydroxy-L-arginine by the mitochondrial amidoxime reducing component (mARC).</title>
        <authorList>
            <person name="Kotthaus J."/>
            <person name="Wahl B."/>
            <person name="Havemeyer A."/>
            <person name="Kotthaus J."/>
            <person name="Schade D."/>
            <person name="Garbe-Schonberg D."/>
            <person name="Mendel R."/>
            <person name="Bittner F."/>
            <person name="Clement B."/>
        </authorList>
    </citation>
    <scope>BIOPHYSICOCHEMICAL PROPERTIES</scope>
    <scope>CATALYTIC ACTIVITY</scope>
    <scope>FUNCTION</scope>
</reference>
<reference key="9">
    <citation type="journal article" date="2012" name="J. Biol. Chem.">
        <title>The mitochondrial amidoxime-reducing component (mARC1) is a novel signal-anchored protein of the outer mitochondrial membrane.</title>
        <authorList>
            <person name="Klein J.M."/>
            <person name="Busch J.D."/>
            <person name="Potting C."/>
            <person name="Baker M.J."/>
            <person name="Langer T."/>
            <person name="Schwarz G."/>
        </authorList>
    </citation>
    <scope>SUBCELLULAR LOCATION</scope>
    <scope>TOPOLOGY</scope>
</reference>
<reference key="10">
    <citation type="journal article" date="2014" name="Nat. Commun.">
        <title>Global profiling of co- and post-translationally N-myristoylated proteomes in human cells.</title>
        <authorList>
            <person name="Thinon E."/>
            <person name="Serwa R.A."/>
            <person name="Broncel M."/>
            <person name="Brannigan J.A."/>
            <person name="Brassat U."/>
            <person name="Wright M.H."/>
            <person name="Heal W.P."/>
            <person name="Wilkinson A.J."/>
            <person name="Mann D.J."/>
            <person name="Tate E.W."/>
        </authorList>
    </citation>
    <scope>MYRISTOYLATION AT GLY-2</scope>
    <scope>CLEAVAGE OF INITIATOR METHIONINE</scope>
    <scope>IDENTIFICATION BY MASS SPECTROMETRY</scope>
</reference>
<reference key="11">
    <citation type="journal article" date="2015" name="Angew. Chem. Int. Ed.">
        <title>Multifunctional reagents for quantitative proteome-wide analysis of protein modification in human cells and dynamic profiling of protein lipidation during vertebrate development.</title>
        <authorList>
            <person name="Broncel M."/>
            <person name="Serwa R.A."/>
            <person name="Ciepla P."/>
            <person name="Krause E."/>
            <person name="Dallman M.J."/>
            <person name="Magee A.I."/>
            <person name="Tate E.W."/>
        </authorList>
    </citation>
    <scope>MYRISTOYLATION AT GLY-2</scope>
    <scope>CLEAVAGE OF INITIATOR METHIONINE</scope>
    <scope>IDENTIFICATION BY MASS SPECTROMETRY</scope>
</reference>
<reference evidence="20" key="12">
    <citation type="journal article" date="2018" name="Proc. Natl. Acad. Sci. U.S.A.">
        <title>Crystal structure of human mARC1 reveals its exceptional position among eukaryotic molybdenum enzymes.</title>
        <authorList>
            <person name="Kubitza C."/>
            <person name="Bittner F."/>
            <person name="Ginsel C."/>
            <person name="Havemeyer A."/>
            <person name="Clement B."/>
            <person name="Scheidig A.J."/>
        </authorList>
    </citation>
    <scope>X-RAY CRYSTALLOGRAPHY (1.78 ANGSTROMS) OF 53-337 IN COMPLEX WITH MO-MOLYBDOPTERIN</scope>
    <scope>COFACTOR</scope>
    <scope>FUNCTION</scope>
    <scope>DOMAIN</scope>
</reference>
<reference key="13">
    <citation type="journal article" date="2014" name="Drug Metab. Dispos.">
        <title>Functional characterization of protein variants encoded by non-synonymous SNPs in MARC1 and MARC2 in healthy Caucasians.</title>
        <authorList>
            <person name="Ott G."/>
            <person name="Reichmann D."/>
            <person name="Boerger C."/>
            <person name="Cascorbi I."/>
            <person name="Bittner F."/>
            <person name="Mendel R.R."/>
            <person name="Kunze T."/>
            <person name="Clement B."/>
            <person name="Havemeyer A."/>
        </authorList>
    </citation>
    <scope>VARIANTS ALA-165; LYS-187; SER-246 AND HIS-247</scope>
    <scope>CHARACTERIZATION OF VARIANTS LEU-96; ALA-165; LYS-187; SER-246; HIS-247 AND ILE-268</scope>
    <scope>BIOPHYSICOCHEMICAL PROPERTIES</scope>
    <scope>COFACTOR</scope>
</reference>